<gene>
    <name evidence="8" type="primary">ACTL6B</name>
    <name type="synonym">ACTL6</name>
    <name type="synonym">BAF53B</name>
</gene>
<evidence type="ECO:0000250" key="1">
    <source>
        <dbReference type="UniProtKB" id="Q99MR0"/>
    </source>
</evidence>
<evidence type="ECO:0000269" key="2">
    <source>
    </source>
</evidence>
<evidence type="ECO:0000269" key="3">
    <source>
    </source>
</evidence>
<evidence type="ECO:0000269" key="4">
    <source>
    </source>
</evidence>
<evidence type="ECO:0000303" key="5">
    <source>
    </source>
</evidence>
<evidence type="ECO:0000303" key="6">
    <source>
    </source>
</evidence>
<evidence type="ECO:0000305" key="7"/>
<evidence type="ECO:0000312" key="8">
    <source>
        <dbReference type="HGNC" id="HGNC:160"/>
    </source>
</evidence>
<reference key="1">
    <citation type="journal article" date="1998" name="Genome Res.">
        <title>Large-scale sequencing of two regions in human chromosome 7q22: analysis of 650 kb of genomic sequence around the EPO and CUTL1 loci reveals 17 genes.</title>
        <authorList>
            <person name="Gloeckner G."/>
            <person name="Scherer S."/>
            <person name="Schattevoy R."/>
            <person name="Boright A.P."/>
            <person name="Weber J."/>
            <person name="Tsui L.-C."/>
            <person name="Rosenthal A."/>
        </authorList>
    </citation>
    <scope>NUCLEOTIDE SEQUENCE [GENOMIC DNA]</scope>
</reference>
<reference key="2">
    <citation type="journal article" date="1999" name="Biosci. Biotechnol. Biochem.">
        <title>Two isoforms of a human actin-related protein show nuclear localization and mutually selective expression between brain and other tissues.</title>
        <authorList>
            <person name="Harata M."/>
            <person name="Mochizuki R."/>
            <person name="Mizuno S."/>
        </authorList>
    </citation>
    <scope>NUCLEOTIDE SEQUENCE [MRNA]</scope>
</reference>
<reference key="3">
    <citation type="journal article" date="2002" name="Genes Dev.">
        <title>Identification of a polymorphic, neuron-specific chromatin remodeling complex.</title>
        <authorList>
            <person name="Olave I."/>
            <person name="Wang W."/>
            <person name="Xue Y."/>
            <person name="Kuo A."/>
            <person name="Crabtree G.R."/>
        </authorList>
    </citation>
    <scope>NUCLEOTIDE SEQUENCE [MRNA]</scope>
    <source>
        <tissue>Brain</tissue>
    </source>
</reference>
<reference key="4">
    <citation type="journal article" date="2004" name="Nat. Genet.">
        <title>Complete sequencing and characterization of 21,243 full-length human cDNAs.</title>
        <authorList>
            <person name="Ota T."/>
            <person name="Suzuki Y."/>
            <person name="Nishikawa T."/>
            <person name="Otsuki T."/>
            <person name="Sugiyama T."/>
            <person name="Irie R."/>
            <person name="Wakamatsu A."/>
            <person name="Hayashi K."/>
            <person name="Sato H."/>
            <person name="Nagai K."/>
            <person name="Kimura K."/>
            <person name="Makita H."/>
            <person name="Sekine M."/>
            <person name="Obayashi M."/>
            <person name="Nishi T."/>
            <person name="Shibahara T."/>
            <person name="Tanaka T."/>
            <person name="Ishii S."/>
            <person name="Yamamoto J."/>
            <person name="Saito K."/>
            <person name="Kawai Y."/>
            <person name="Isono Y."/>
            <person name="Nakamura Y."/>
            <person name="Nagahari K."/>
            <person name="Murakami K."/>
            <person name="Yasuda T."/>
            <person name="Iwayanagi T."/>
            <person name="Wagatsuma M."/>
            <person name="Shiratori A."/>
            <person name="Sudo H."/>
            <person name="Hosoiri T."/>
            <person name="Kaku Y."/>
            <person name="Kodaira H."/>
            <person name="Kondo H."/>
            <person name="Sugawara M."/>
            <person name="Takahashi M."/>
            <person name="Kanda K."/>
            <person name="Yokoi T."/>
            <person name="Furuya T."/>
            <person name="Kikkawa E."/>
            <person name="Omura Y."/>
            <person name="Abe K."/>
            <person name="Kamihara K."/>
            <person name="Katsuta N."/>
            <person name="Sato K."/>
            <person name="Tanikawa M."/>
            <person name="Yamazaki M."/>
            <person name="Ninomiya K."/>
            <person name="Ishibashi T."/>
            <person name="Yamashita H."/>
            <person name="Murakawa K."/>
            <person name="Fujimori K."/>
            <person name="Tanai H."/>
            <person name="Kimata M."/>
            <person name="Watanabe M."/>
            <person name="Hiraoka S."/>
            <person name="Chiba Y."/>
            <person name="Ishida S."/>
            <person name="Ono Y."/>
            <person name="Takiguchi S."/>
            <person name="Watanabe S."/>
            <person name="Yosida M."/>
            <person name="Hotuta T."/>
            <person name="Kusano J."/>
            <person name="Kanehori K."/>
            <person name="Takahashi-Fujii A."/>
            <person name="Hara H."/>
            <person name="Tanase T.-O."/>
            <person name="Nomura Y."/>
            <person name="Togiya S."/>
            <person name="Komai F."/>
            <person name="Hara R."/>
            <person name="Takeuchi K."/>
            <person name="Arita M."/>
            <person name="Imose N."/>
            <person name="Musashino K."/>
            <person name="Yuuki H."/>
            <person name="Oshima A."/>
            <person name="Sasaki N."/>
            <person name="Aotsuka S."/>
            <person name="Yoshikawa Y."/>
            <person name="Matsunawa H."/>
            <person name="Ichihara T."/>
            <person name="Shiohata N."/>
            <person name="Sano S."/>
            <person name="Moriya S."/>
            <person name="Momiyama H."/>
            <person name="Satoh N."/>
            <person name="Takami S."/>
            <person name="Terashima Y."/>
            <person name="Suzuki O."/>
            <person name="Nakagawa S."/>
            <person name="Senoh A."/>
            <person name="Mizoguchi H."/>
            <person name="Goto Y."/>
            <person name="Shimizu F."/>
            <person name="Wakebe H."/>
            <person name="Hishigaki H."/>
            <person name="Watanabe T."/>
            <person name="Sugiyama A."/>
            <person name="Takemoto M."/>
            <person name="Kawakami B."/>
            <person name="Yamazaki M."/>
            <person name="Watanabe K."/>
            <person name="Kumagai A."/>
            <person name="Itakura S."/>
            <person name="Fukuzumi Y."/>
            <person name="Fujimori Y."/>
            <person name="Komiyama M."/>
            <person name="Tashiro H."/>
            <person name="Tanigami A."/>
            <person name="Fujiwara T."/>
            <person name="Ono T."/>
            <person name="Yamada K."/>
            <person name="Fujii Y."/>
            <person name="Ozaki K."/>
            <person name="Hirao M."/>
            <person name="Ohmori Y."/>
            <person name="Kawabata A."/>
            <person name="Hikiji T."/>
            <person name="Kobatake N."/>
            <person name="Inagaki H."/>
            <person name="Ikema Y."/>
            <person name="Okamoto S."/>
            <person name="Okitani R."/>
            <person name="Kawakami T."/>
            <person name="Noguchi S."/>
            <person name="Itoh T."/>
            <person name="Shigeta K."/>
            <person name="Senba T."/>
            <person name="Matsumura K."/>
            <person name="Nakajima Y."/>
            <person name="Mizuno T."/>
            <person name="Morinaga M."/>
            <person name="Sasaki M."/>
            <person name="Togashi T."/>
            <person name="Oyama M."/>
            <person name="Hata H."/>
            <person name="Watanabe M."/>
            <person name="Komatsu T."/>
            <person name="Mizushima-Sugano J."/>
            <person name="Satoh T."/>
            <person name="Shirai Y."/>
            <person name="Takahashi Y."/>
            <person name="Nakagawa K."/>
            <person name="Okumura K."/>
            <person name="Nagase T."/>
            <person name="Nomura N."/>
            <person name="Kikuchi H."/>
            <person name="Masuho Y."/>
            <person name="Yamashita R."/>
            <person name="Nakai K."/>
            <person name="Yada T."/>
            <person name="Nakamura Y."/>
            <person name="Ohara O."/>
            <person name="Isogai T."/>
            <person name="Sugano S."/>
        </authorList>
    </citation>
    <scope>NUCLEOTIDE SEQUENCE [LARGE SCALE MRNA]</scope>
    <source>
        <tissue>Fetal brain</tissue>
    </source>
</reference>
<reference key="5">
    <citation type="journal article" date="2003" name="Nature">
        <title>The DNA sequence of human chromosome 7.</title>
        <authorList>
            <person name="Hillier L.W."/>
            <person name="Fulton R.S."/>
            <person name="Fulton L.A."/>
            <person name="Graves T.A."/>
            <person name="Pepin K.H."/>
            <person name="Wagner-McPherson C."/>
            <person name="Layman D."/>
            <person name="Maas J."/>
            <person name="Jaeger S."/>
            <person name="Walker R."/>
            <person name="Wylie K."/>
            <person name="Sekhon M."/>
            <person name="Becker M.C."/>
            <person name="O'Laughlin M.D."/>
            <person name="Schaller M.E."/>
            <person name="Fewell G.A."/>
            <person name="Delehaunty K.D."/>
            <person name="Miner T.L."/>
            <person name="Nash W.E."/>
            <person name="Cordes M."/>
            <person name="Du H."/>
            <person name="Sun H."/>
            <person name="Edwards J."/>
            <person name="Bradshaw-Cordum H."/>
            <person name="Ali J."/>
            <person name="Andrews S."/>
            <person name="Isak A."/>
            <person name="Vanbrunt A."/>
            <person name="Nguyen C."/>
            <person name="Du F."/>
            <person name="Lamar B."/>
            <person name="Courtney L."/>
            <person name="Kalicki J."/>
            <person name="Ozersky P."/>
            <person name="Bielicki L."/>
            <person name="Scott K."/>
            <person name="Holmes A."/>
            <person name="Harkins R."/>
            <person name="Harris A."/>
            <person name="Strong C.M."/>
            <person name="Hou S."/>
            <person name="Tomlinson C."/>
            <person name="Dauphin-Kohlberg S."/>
            <person name="Kozlowicz-Reilly A."/>
            <person name="Leonard S."/>
            <person name="Rohlfing T."/>
            <person name="Rock S.M."/>
            <person name="Tin-Wollam A.-M."/>
            <person name="Abbott A."/>
            <person name="Minx P."/>
            <person name="Maupin R."/>
            <person name="Strowmatt C."/>
            <person name="Latreille P."/>
            <person name="Miller N."/>
            <person name="Johnson D."/>
            <person name="Murray J."/>
            <person name="Woessner J.P."/>
            <person name="Wendl M.C."/>
            <person name="Yang S.-P."/>
            <person name="Schultz B.R."/>
            <person name="Wallis J.W."/>
            <person name="Spieth J."/>
            <person name="Bieri T.A."/>
            <person name="Nelson J.O."/>
            <person name="Berkowicz N."/>
            <person name="Wohldmann P.E."/>
            <person name="Cook L.L."/>
            <person name="Hickenbotham M.T."/>
            <person name="Eldred J."/>
            <person name="Williams D."/>
            <person name="Bedell J.A."/>
            <person name="Mardis E.R."/>
            <person name="Clifton S.W."/>
            <person name="Chissoe S.L."/>
            <person name="Marra M.A."/>
            <person name="Raymond C."/>
            <person name="Haugen E."/>
            <person name="Gillett W."/>
            <person name="Zhou Y."/>
            <person name="James R."/>
            <person name="Phelps K."/>
            <person name="Iadanoto S."/>
            <person name="Bubb K."/>
            <person name="Simms E."/>
            <person name="Levy R."/>
            <person name="Clendenning J."/>
            <person name="Kaul R."/>
            <person name="Kent W.J."/>
            <person name="Furey T.S."/>
            <person name="Baertsch R.A."/>
            <person name="Brent M.R."/>
            <person name="Keibler E."/>
            <person name="Flicek P."/>
            <person name="Bork P."/>
            <person name="Suyama M."/>
            <person name="Bailey J.A."/>
            <person name="Portnoy M.E."/>
            <person name="Torrents D."/>
            <person name="Chinwalla A.T."/>
            <person name="Gish W.R."/>
            <person name="Eddy S.R."/>
            <person name="McPherson J.D."/>
            <person name="Olson M.V."/>
            <person name="Eichler E.E."/>
            <person name="Green E.D."/>
            <person name="Waterston R.H."/>
            <person name="Wilson R.K."/>
        </authorList>
    </citation>
    <scope>NUCLEOTIDE SEQUENCE [LARGE SCALE GENOMIC DNA]</scope>
</reference>
<reference key="6">
    <citation type="journal article" date="2003" name="Science">
        <title>Human chromosome 7: DNA sequence and biology.</title>
        <authorList>
            <person name="Scherer S.W."/>
            <person name="Cheung J."/>
            <person name="MacDonald J.R."/>
            <person name="Osborne L.R."/>
            <person name="Nakabayashi K."/>
            <person name="Herbrick J.-A."/>
            <person name="Carson A.R."/>
            <person name="Parker-Katiraee L."/>
            <person name="Skaug J."/>
            <person name="Khaja R."/>
            <person name="Zhang J."/>
            <person name="Hudek A.K."/>
            <person name="Li M."/>
            <person name="Haddad M."/>
            <person name="Duggan G.E."/>
            <person name="Fernandez B.A."/>
            <person name="Kanematsu E."/>
            <person name="Gentles S."/>
            <person name="Christopoulos C.C."/>
            <person name="Choufani S."/>
            <person name="Kwasnicka D."/>
            <person name="Zheng X.H."/>
            <person name="Lai Z."/>
            <person name="Nusskern D.R."/>
            <person name="Zhang Q."/>
            <person name="Gu Z."/>
            <person name="Lu F."/>
            <person name="Zeesman S."/>
            <person name="Nowaczyk M.J."/>
            <person name="Teshima I."/>
            <person name="Chitayat D."/>
            <person name="Shuman C."/>
            <person name="Weksberg R."/>
            <person name="Zackai E.H."/>
            <person name="Grebe T.A."/>
            <person name="Cox S.R."/>
            <person name="Kirkpatrick S.J."/>
            <person name="Rahman N."/>
            <person name="Friedman J.M."/>
            <person name="Heng H.H.Q."/>
            <person name="Pelicci P.G."/>
            <person name="Lo-Coco F."/>
            <person name="Belloni E."/>
            <person name="Shaffer L.G."/>
            <person name="Pober B."/>
            <person name="Morton C.C."/>
            <person name="Gusella J.F."/>
            <person name="Bruns G.A.P."/>
            <person name="Korf B.R."/>
            <person name="Quade B.J."/>
            <person name="Ligon A.H."/>
            <person name="Ferguson H."/>
            <person name="Higgins A.W."/>
            <person name="Leach N.T."/>
            <person name="Herrick S.R."/>
            <person name="Lemyre E."/>
            <person name="Farra C.G."/>
            <person name="Kim H.-G."/>
            <person name="Summers A.M."/>
            <person name="Gripp K.W."/>
            <person name="Roberts W."/>
            <person name="Szatmari P."/>
            <person name="Winsor E.J.T."/>
            <person name="Grzeschik K.-H."/>
            <person name="Teebi A."/>
            <person name="Minassian B.A."/>
            <person name="Kere J."/>
            <person name="Armengol L."/>
            <person name="Pujana M.A."/>
            <person name="Estivill X."/>
            <person name="Wilson M.D."/>
            <person name="Koop B.F."/>
            <person name="Tosi S."/>
            <person name="Moore G.E."/>
            <person name="Boright A.P."/>
            <person name="Zlotorynski E."/>
            <person name="Kerem B."/>
            <person name="Kroisel P.M."/>
            <person name="Petek E."/>
            <person name="Oscier D.G."/>
            <person name="Mould S.J."/>
            <person name="Doehner H."/>
            <person name="Doehner K."/>
            <person name="Rommens J.M."/>
            <person name="Vincent J.B."/>
            <person name="Venter J.C."/>
            <person name="Li P.W."/>
            <person name="Mural R.J."/>
            <person name="Adams M.D."/>
            <person name="Tsui L.-C."/>
        </authorList>
    </citation>
    <scope>NUCLEOTIDE SEQUENCE [LARGE SCALE GENOMIC DNA]</scope>
</reference>
<reference key="7">
    <citation type="submission" date="2005-09" db="EMBL/GenBank/DDBJ databases">
        <authorList>
            <person name="Mural R.J."/>
            <person name="Istrail S."/>
            <person name="Sutton G.G."/>
            <person name="Florea L."/>
            <person name="Halpern A.L."/>
            <person name="Mobarry C.M."/>
            <person name="Lippert R."/>
            <person name="Walenz B."/>
            <person name="Shatkay H."/>
            <person name="Dew I."/>
            <person name="Miller J.R."/>
            <person name="Flanigan M.J."/>
            <person name="Edwards N.J."/>
            <person name="Bolanos R."/>
            <person name="Fasulo D."/>
            <person name="Halldorsson B.V."/>
            <person name="Hannenhalli S."/>
            <person name="Turner R."/>
            <person name="Yooseph S."/>
            <person name="Lu F."/>
            <person name="Nusskern D.R."/>
            <person name="Shue B.C."/>
            <person name="Zheng X.H."/>
            <person name="Zhong F."/>
            <person name="Delcher A.L."/>
            <person name="Huson D.H."/>
            <person name="Kravitz S.A."/>
            <person name="Mouchard L."/>
            <person name="Reinert K."/>
            <person name="Remington K.A."/>
            <person name="Clark A.G."/>
            <person name="Waterman M.S."/>
            <person name="Eichler E.E."/>
            <person name="Adams M.D."/>
            <person name="Hunkapiller M.W."/>
            <person name="Myers E.W."/>
            <person name="Venter J.C."/>
        </authorList>
    </citation>
    <scope>NUCLEOTIDE SEQUENCE [LARGE SCALE GENOMIC DNA]</scope>
</reference>
<reference key="8">
    <citation type="journal article" date="2004" name="Genome Res.">
        <title>The status, quality, and expansion of the NIH full-length cDNA project: the Mammalian Gene Collection (MGC).</title>
        <authorList>
            <consortium name="The MGC Project Team"/>
        </authorList>
    </citation>
    <scope>NUCLEOTIDE SEQUENCE [LARGE SCALE MRNA]</scope>
    <source>
        <tissue>Brain</tissue>
    </source>
</reference>
<reference key="9">
    <citation type="submission" date="2007-03" db="UniProtKB">
        <authorList>
            <person name="Lubec G."/>
            <person name="Vishwanath V."/>
        </authorList>
    </citation>
    <scope>PROTEIN SEQUENCE OF 64-76</scope>
    <scope>IDENTIFICATION BY MASS SPECTROMETRY</scope>
    <source>
        <tissue>Brain</tissue>
        <tissue>Cajal-Retzius cell</tissue>
    </source>
</reference>
<reference key="10">
    <citation type="journal article" date="2012" name="J. Biol. Chem.">
        <title>SWI/SNF chromatin-remodeling factors: multiscale analyses and diverse functions.</title>
        <authorList>
            <person name="Euskirchen G."/>
            <person name="Auerbach R.K."/>
            <person name="Snyder M."/>
        </authorList>
    </citation>
    <scope>REVIEW ON SWI/SNF CHROMATIN REMODELING COMPLEXES</scope>
</reference>
<reference key="11">
    <citation type="journal article" date="2015" name="Sci. Adv.">
        <title>Mammalian SWI/SNF chromatin remodeling complexes and cancer: Mechanistic insights gained from human genomics.</title>
        <authorList>
            <person name="Kadoch C."/>
            <person name="Crabtree G.R."/>
        </authorList>
    </citation>
    <scope>REVIEW ON SWI/SNF CHROMATIN REMODELING COMPLEXES</scope>
</reference>
<reference key="12">
    <citation type="journal article" date="2019" name="Am. J. Hum. Genet.">
        <title>Mutations in ACTL6B Cause Neurodevelopmental Deficits and Epilepsy and Lead to Loss of Dendrites in Human Neurons.</title>
        <authorList>
            <person name="Bell S."/>
            <person name="Rousseau J."/>
            <person name="Peng H."/>
            <person name="Aouabed Z."/>
            <person name="Priam P."/>
            <person name="Theroux J.F."/>
            <person name="Jefri M."/>
            <person name="Tanti A."/>
            <person name="Wu H."/>
            <person name="Kolobova I."/>
            <person name="Silviera H."/>
            <person name="Manzano-Vargas K."/>
            <person name="Ehresmann S."/>
            <person name="Hamdan F.F."/>
            <person name="Hettige N."/>
            <person name="Zhang X."/>
            <person name="Antonyan L."/>
            <person name="Nassif C."/>
            <person name="Ghaloul-Gonzalez L."/>
            <person name="Sebastian J."/>
            <person name="Vockley J."/>
            <person name="Begtrup A.G."/>
            <person name="Wentzensen I.M."/>
            <person name="Crunk A."/>
            <person name="Nicholls R.D."/>
            <person name="Herman K.C."/>
            <person name="Deignan J.L."/>
            <person name="Al-Hertani W."/>
            <person name="Efthymiou S."/>
            <person name="Salpietro V."/>
            <person name="Miyake N."/>
            <person name="Makita Y."/>
            <person name="Matsumoto N."/>
            <person name="Oestern R."/>
            <person name="Houge G."/>
            <person name="Hafstroem M."/>
            <person name="Fassi E."/>
            <person name="Houlden H."/>
            <person name="Klein Wassink-Ruiter J.S."/>
            <person name="Nelson D."/>
            <person name="Goldstein A."/>
            <person name="Dabir T."/>
            <person name="van Gils J."/>
            <person name="Bourgeron T."/>
            <person name="Delorme R."/>
            <person name="Cooper G.M."/>
            <person name="Martinez J.E."/>
            <person name="Finnila C.R."/>
            <person name="Carmant L."/>
            <person name="Lortie A."/>
            <person name="Oegema R."/>
            <person name="van Gassen K."/>
            <person name="Mehta S.G."/>
            <person name="Huhle D."/>
            <person name="Abou Jamra R."/>
            <person name="Martin S."/>
            <person name="Brunner H.G."/>
            <person name="Lindhout D."/>
            <person name="Au M."/>
            <person name="Graham J.M. Jr."/>
            <person name="Coubes C."/>
            <person name="Turecki G."/>
            <person name="Gravel S."/>
            <person name="Mechawar N."/>
            <person name="Rossignol E."/>
            <person name="Michaud J.L."/>
            <person name="Lessard J."/>
            <person name="Ernst C."/>
            <person name="Campeau P.M."/>
        </authorList>
    </citation>
    <scope>FUNCTION</scope>
    <scope>VARIANTS DEE76 97-ARG--PRO-426 DEL; GLN-130; PHE-147 DEL; 186-GLN--PRO-426 DEL; PRO-206; 242-GLN--PRO-426 DEL; 247-TRP--PRO-426 DEL; 284-TYR--PRO-426 DEL; SER-349; 411-GLN--PRO-426 DEL AND 425-CYS-PRO-426 DEL</scope>
    <scope>VARIANTS IDDSSAD GLY-77 AND ARG-343</scope>
    <scope>CHARACTERIZATION OF VARIANT IDDSSAD ARG-343</scope>
</reference>
<reference key="13">
    <citation type="journal article" date="2019" name="Genet. Med.">
        <title>Autozygome and high throughput confirmation of disease genes candidacy.</title>
        <authorList>
            <person name="Maddirevula S."/>
            <person name="Alzahrani F."/>
            <person name="Al-Owain M."/>
            <person name="Al Muhaizea M.A."/>
            <person name="Kayyali H.R."/>
            <person name="AlHashem A."/>
            <person name="Rahbeeni Z."/>
            <person name="Al-Otaibi M."/>
            <person name="Alzaidan H.I."/>
            <person name="Balobaid A."/>
            <person name="El Khashab H.Y."/>
            <person name="Bubshait D.K."/>
            <person name="Faden M."/>
            <person name="Yamani S.A."/>
            <person name="Dabbagh O."/>
            <person name="Al-Mureikhi M."/>
            <person name="Jasser A.A."/>
            <person name="Alsaif H.S."/>
            <person name="Alluhaydan I."/>
            <person name="Seidahmed M.Z."/>
            <person name="Alabbasi B.H."/>
            <person name="Almogarri I."/>
            <person name="Kurdi W."/>
            <person name="Akleh H."/>
            <person name="Qari A."/>
            <person name="Al Tala S.M."/>
            <person name="Alhomaidi S."/>
            <person name="Kentab A.Y."/>
            <person name="Salih M.A."/>
            <person name="Chedrawi A."/>
            <person name="Alameer S."/>
            <person name="Tabarki B."/>
            <person name="Shamseldin H.E."/>
            <person name="Patel N."/>
            <person name="Ibrahim N."/>
            <person name="Abdulwahab F."/>
            <person name="Samira M."/>
            <person name="Goljan E."/>
            <person name="Abouelhoda M."/>
            <person name="Meyer B.F."/>
            <person name="Hashem M."/>
            <person name="Shaheen R."/>
            <person name="AlShahwan S."/>
            <person name="Alfadhel M."/>
            <person name="Ben-Omran T."/>
            <person name="Al-Qattan M.M."/>
            <person name="Monies D."/>
            <person name="Alkuraya F.S."/>
        </authorList>
    </citation>
    <scope>VARIANT DEE76 333-CYS--PRO-426 DEL</scope>
</reference>
<reference key="14">
    <citation type="journal article" date="2019" name="Hum. Genet.">
        <title>Mutations in ACTL6B, coding for a subunit of the neuron-specific chromatin remodeling complex nBAF, cause early onset severe developmental and epileptic encephalopathy with brain hypomyelination and cerebellar atrophy.</title>
        <authorList>
            <person name="Fichera M."/>
            <person name="Failla P."/>
            <person name="Saccuzzo L."/>
            <person name="Miceli M."/>
            <person name="Salvo E."/>
            <person name="Castiglia L."/>
            <person name="Galesi O."/>
            <person name="Grillo L."/>
            <person name="Cali F."/>
            <person name="Greco D."/>
            <person name="Amato C."/>
            <person name="Romano C."/>
            <person name="Elia M."/>
        </authorList>
    </citation>
    <scope>VARIANTS DEE76 274-GLN--PRO-426 DEL AND SER-349</scope>
</reference>
<comment type="function">
    <text evidence="1 4 5 6">Involved in transcriptional activation and repression of select genes by chromatin remodeling (alteration of DNA-nucleosome topology). Component of SWI/SNF chromatin remodeling complexes that carry out key enzymatic activities, changing chromatin structure by altering DNA-histone contacts within a nucleosome in an ATP-dependent manner. Belongs to the neuron-specific chromatin remodeling complex (nBAF complex), as such plays a role in remodeling mononucleosomes in an ATP-dependent fashion, and is required for postmitotic neural development and dendritic outgrowth. During neural development a switch from a stem/progenitor to a postmitotic chromatin remodeling mechanism occurs as neurons exit the cell cycle and become committed to their adult state. The transition from proliferating neural stem/progenitor cells to postmitotic neurons requires a switch in subunit composition of the npBAF and nBAF complexes. As neural progenitors exit mitosis and differentiate into neurons, npBAF complexes which contain ACTL6A/BAF53A and PHF10/BAF45A, are exchanged for homologous alternative ACTL6B/BAF53B and DPF1/BAF45B or DPF3/BAF45C subunits in neuron-specific complexes (nBAF). The npBAF complex is essential for the self-renewal/proliferative capacity of the multipotent neural stem cells. The nBAF complex along with CREST plays a role regulating the activity of genes essential for dendrite growth. ACTL6B/BAF53B is not essential for assembly of the nBAF complex but is required for targeting the complex and CREST to the promoter of genes essential for dendritic growth (By similarity). Essential for neuronal maturation and dendrite development (PubMed:31031012).</text>
</comment>
<comment type="subunit">
    <text evidence="1 5 6">Component of the multiprotein chromatin-remodeling complexes SWI/SNF: SWI/SNF-A (BAF), SWI/SNF-B (PBAF) and related complexes. The canonical complex contains a catalytic subunit (either SMARCA4/BRG1/BAF190A or SMARCA2/BRM/BAF190B) and at least SMARCE1, ACTL6A/BAF53, SMARCC1/BAF155, SMARCC2/BAF170 and SMARCB1/SNF5/BAF47. Other subunits specific to each of the complexes may also be present permitting several possible combinations developmentally and tissue specific (PubMed:22952240, PubMed:26601204). Component of the BAF complex, which includes at least actin (ACTB), ARID1A/BAF250A, ARID1B/BAF250B, SMARCA2/BRM, SMARCA4/BRG1/BAF190A, ACTL6A/BAF53, ACTL6B/BAF53B, SMARCE1/BAF57, SMARCC1/BAF155, SMARCC2/BAF170, SMARCB1/SNF5/INI1 and one or more SMARCD1/BAF60A, SMARCD2/BAF60B, or SMARCD3/BAF60C (PubMed:22952240, PubMed:26601204). Component of neuron-specific chromatin remodeling complex (nBAF complex) composed of at least, ARID1A/BAF250A or ARID1B/BAF250B, SMARCD1/BAF60A or SMARCD2/BAF60B or SMARCD3/BAF60C, SMARCA2/BRM/BAF190B, SMARCA4/BRG1/BAF190A, SMARCB1/BAF47, SMARCC1/BAF155, SMARCE1/BAF57, SMARCC2/BAF170, DPF1/BAF45B, DPF3/BAF45C, ACTL6B/BAF53B and actin (ACTB). Note that the nBAF complex is polymorphic in regard to the ATPase, SMARCA2 and SMARCA4 occupying mutually exclusive positions. May be a component of the SWI/SNF-B (PBAF) chromatin remodeling complex, at least composed of SMARCA4/BRG1, SMARCB1/BAF47/SNF5, ACTL6A/BAF53A or ACTL6B/BAF53B, SMARCE1/BAF57, SMARCD1/BAF60A, SMARCD2/BAF60B, perhaps SMARCD3/BAF60C, SMARCC1/BAF155, SMARCC2/BAF170, PBRM1/BAF180, ARID2/BAF200 and actin (PubMed:22952240, PubMed:26601204).</text>
</comment>
<comment type="subcellular location">
    <subcellularLocation>
        <location evidence="6">Nucleus</location>
    </subcellularLocation>
</comment>
<comment type="disease" evidence="2 3 4">
    <disease id="DI-05592">
        <name>Developmental and epileptic encephalopathy 76</name>
        <acronym>DEE76</acronym>
        <description>A form of epileptic encephalopathy, a heterogeneous group of severe early-onset epilepsies characterized by refractory seizures, neurodevelopmental impairment, and poor prognosis. Development is normal prior to seizure onset, after which cognitive and motor delays become apparent. DEE76 is an autosomal recessive form that may result in death in childhood.</description>
        <dbReference type="MIM" id="618468"/>
    </disease>
    <text>The disease is caused by variants affecting the gene represented in this entry.</text>
</comment>
<comment type="disease" evidence="4">
    <disease id="DI-05593">
        <name>Intellectual developmental disorder with severe speech and ambulation defects</name>
        <acronym>IDDSSAD</acronym>
        <description>An autosomal dominant neurodevelopmental disorder with onset in infancy, and characterized by global developmental delay, intellectual disability, ambulation deficits, severe language impairment, and minor dysmorphic features including a wide mouth, diastema, and bulbous nose. Additional manifestations are spasticity, hypotonia and autistic features including stereotypies. Brain imaging show thin corpus callosum, generalized atrophy, and mild periventricular gliosis.</description>
        <dbReference type="MIM" id="618470"/>
    </disease>
    <text>The disease is caused by variants affecting the gene represented in this entry.</text>
</comment>
<comment type="similarity">
    <text evidence="7">Belongs to the actin family.</text>
</comment>
<comment type="sequence caution" evidence="7">
    <conflict type="erroneous gene model prediction">
        <sequence resource="EMBL-CDS" id="AAC78795"/>
    </conflict>
</comment>
<name>ACL6B_HUMAN</name>
<keyword id="KW-0156">Chromatin regulator</keyword>
<keyword id="KW-0903">Direct protein sequencing</keyword>
<keyword id="KW-0225">Disease variant</keyword>
<keyword id="KW-0887">Epilepsy</keyword>
<keyword id="KW-0991">Intellectual disability</keyword>
<keyword id="KW-0524">Neurogenesis</keyword>
<keyword id="KW-0539">Nucleus</keyword>
<keyword id="KW-1267">Proteomics identification</keyword>
<keyword id="KW-1185">Reference proteome</keyword>
<keyword id="KW-0804">Transcription</keyword>
<keyword id="KW-0805">Transcription regulation</keyword>
<dbReference type="EMBL" id="AF053356">
    <property type="protein sequence ID" value="AAC78795.1"/>
    <property type="status" value="ALT_SEQ"/>
    <property type="molecule type" value="Genomic_DNA"/>
</dbReference>
<dbReference type="EMBL" id="AB015906">
    <property type="protein sequence ID" value="BAA74576.1"/>
    <property type="molecule type" value="mRNA"/>
</dbReference>
<dbReference type="EMBL" id="AF041475">
    <property type="protein sequence ID" value="AAD54678.1"/>
    <property type="molecule type" value="mRNA"/>
</dbReference>
<dbReference type="EMBL" id="AK314940">
    <property type="protein sequence ID" value="BAG37446.1"/>
    <property type="molecule type" value="mRNA"/>
</dbReference>
<dbReference type="EMBL" id="AC099394">
    <property type="protein sequence ID" value="AAP21874.1"/>
    <property type="molecule type" value="Genomic_DNA"/>
</dbReference>
<dbReference type="EMBL" id="CH236956">
    <property type="protein sequence ID" value="EAL23823.1"/>
    <property type="molecule type" value="Genomic_DNA"/>
</dbReference>
<dbReference type="EMBL" id="CH471091">
    <property type="protein sequence ID" value="EAW76502.1"/>
    <property type="molecule type" value="Genomic_DNA"/>
</dbReference>
<dbReference type="EMBL" id="BC020944">
    <property type="protein sequence ID" value="AAH20944.1"/>
    <property type="molecule type" value="mRNA"/>
</dbReference>
<dbReference type="CCDS" id="CCDS5702.1"/>
<dbReference type="RefSeq" id="NP_057272.1">
    <property type="nucleotide sequence ID" value="NM_016188.5"/>
</dbReference>
<dbReference type="SMR" id="O94805"/>
<dbReference type="BioGRID" id="119529">
    <property type="interactions" value="109"/>
</dbReference>
<dbReference type="ComplexPortal" id="CPX-1196">
    <property type="entry name" value="Polybromo-associated SWI/SNF ATP-dependent chromatin remodeling complex, ACTL6B variant"/>
</dbReference>
<dbReference type="ComplexPortal" id="CPX-1202">
    <property type="entry name" value="Neuron-specific SWI/SNF ATP-dependent chromatin remodeling complex, ARID1A-SMARCA2 variant"/>
</dbReference>
<dbReference type="ComplexPortal" id="CPX-1203">
    <property type="entry name" value="Brain-specific SWI/SNF ATP-dependent chromatin remodeling complex, ARID1A-SMARCA2 variant"/>
</dbReference>
<dbReference type="ComplexPortal" id="CPX-1207">
    <property type="entry name" value="SWI/SNF ATP-dependent chromatin remodeling complex, ACTL6B-ARID1A-SMARCA2 variant"/>
</dbReference>
<dbReference type="ComplexPortal" id="CPX-1209">
    <property type="entry name" value="SWI/SNF ATP-dependent chromatin remodeling complex, ACTL6B-ARID1A-SMARCA4 variant"/>
</dbReference>
<dbReference type="ComplexPortal" id="CPX-1210">
    <property type="entry name" value="SWI/SNF ATP-dependent chromatin remodeling complex, ACTL6B-ARID1B-SMARCA2 variant"/>
</dbReference>
<dbReference type="ComplexPortal" id="CPX-1211">
    <property type="entry name" value="SWI/SNF ATP-dependent chromatin remodeling complex, ACTL6B-ARID1B-SMARCA4 variant"/>
</dbReference>
<dbReference type="ComplexPortal" id="CPX-1216">
    <property type="entry name" value="Neuron-specific SWI/SNF ATP-dependent chromatin remodeling complex, ARID1A-SMARCA4 variant"/>
</dbReference>
<dbReference type="ComplexPortal" id="CPX-1217">
    <property type="entry name" value="Neuron-specific SWI/SNF ATP-dependent chromatin remodeling complex, ARID1B-SMARCA2 variant"/>
</dbReference>
<dbReference type="ComplexPortal" id="CPX-1218">
    <property type="entry name" value="Neuron-specific SWI/SNF ATP-dependent chromatin remodeling complex, ARID1B-SMARCA4 variant"/>
</dbReference>
<dbReference type="ComplexPortal" id="CPX-1219">
    <property type="entry name" value="Brain-specific SWI/SNF ATP-dependent chromatin remodeling complex, ARID1A-SMARCA4 variant"/>
</dbReference>
<dbReference type="ComplexPortal" id="CPX-1220">
    <property type="entry name" value="Brain-specific SWI/SNF ATP-dependent chromatin remodeling complex, ARID1B-SMARCA2 variant"/>
</dbReference>
<dbReference type="ComplexPortal" id="CPX-1221">
    <property type="entry name" value="Brain-specific SWI/SNF ATP-dependent chromatin remodeling complex, ARID1B-SMARCA4 variant"/>
</dbReference>
<dbReference type="ComplexPortal" id="CPX-1225">
    <property type="entry name" value="Muscle cell-specific SWI/SNF ATP-dependent chromatin remodeling complex, ACTL6B-ARID1A-SMARCA2 variant"/>
</dbReference>
<dbReference type="ComplexPortal" id="CPX-1226">
    <property type="entry name" value="Muscle cell-specific SWI/SNF ATP-dependent chromatin remodeling complex, ACTL6B-ARID1A-SMARCA4 variant"/>
</dbReference>
<dbReference type="ComplexPortal" id="CPX-1227">
    <property type="entry name" value="Muscle cell-specific SWI/SNF ATP-dependent chromatin remodeling complex, ACTL6B-ARID1B-SMARCA2 variant"/>
</dbReference>
<dbReference type="ComplexPortal" id="CPX-1228">
    <property type="entry name" value="Muscle cell-specific SWI/SNF ATP-dependent chromatin remodeling complex, ACTL6B-ARID1B-SMARCA4 variant"/>
</dbReference>
<dbReference type="ComplexPortal" id="CPX-4223">
    <property type="entry name" value="GBAF (SWI/SNF) ATP-dependent chromatin remodeling complex, ACTL6B-BICRA-SMARCA2 variant"/>
</dbReference>
<dbReference type="ComplexPortal" id="CPX-4224">
    <property type="entry name" value="GBAF (SWI/SNF) ATP-dependent chromatin remodeling complex, ACTL6B-BICRAL-SMARCA2 variant"/>
</dbReference>
<dbReference type="ComplexPortal" id="CPX-4225">
    <property type="entry name" value="GBAF (SWI/SNF) ATP-dependent chromatin remodeling complex, ACTL6B-BICRA-SMARCA4 variant"/>
</dbReference>
<dbReference type="ComplexPortal" id="CPX-4226">
    <property type="entry name" value="GBAF (SWI/SNF) ATP-dependent chromatin remodeling complex, ACTL6B-BICRAL-SMARCA4 variant"/>
</dbReference>
<dbReference type="CORUM" id="O94805"/>
<dbReference type="ELM" id="O94805"/>
<dbReference type="FunCoup" id="O94805">
    <property type="interactions" value="1188"/>
</dbReference>
<dbReference type="IntAct" id="O94805">
    <property type="interactions" value="70"/>
</dbReference>
<dbReference type="MINT" id="O94805"/>
<dbReference type="STRING" id="9606.ENSP00000160382"/>
<dbReference type="iPTMnet" id="O94805"/>
<dbReference type="PhosphoSitePlus" id="O94805"/>
<dbReference type="BioMuta" id="ACTL6B"/>
<dbReference type="jPOST" id="O94805"/>
<dbReference type="MassIVE" id="O94805"/>
<dbReference type="PaxDb" id="9606-ENSP00000160382"/>
<dbReference type="PeptideAtlas" id="O94805"/>
<dbReference type="ProteomicsDB" id="50445"/>
<dbReference type="ABCD" id="O94805">
    <property type="antibodies" value="1 sequenced antibody"/>
</dbReference>
<dbReference type="Antibodypedia" id="30798">
    <property type="antibodies" value="202 antibodies from 32 providers"/>
</dbReference>
<dbReference type="DNASU" id="51412"/>
<dbReference type="Ensembl" id="ENST00000160382.10">
    <property type="protein sequence ID" value="ENSP00000160382.5"/>
    <property type="gene ID" value="ENSG00000077080.10"/>
</dbReference>
<dbReference type="GeneID" id="51412"/>
<dbReference type="KEGG" id="hsa:51412"/>
<dbReference type="MANE-Select" id="ENST00000160382.10">
    <property type="protein sequence ID" value="ENSP00000160382.5"/>
    <property type="RefSeq nucleotide sequence ID" value="NM_016188.5"/>
    <property type="RefSeq protein sequence ID" value="NP_057272.1"/>
</dbReference>
<dbReference type="UCSC" id="uc003uvy.4">
    <property type="organism name" value="human"/>
</dbReference>
<dbReference type="AGR" id="HGNC:160"/>
<dbReference type="CTD" id="51412"/>
<dbReference type="DisGeNET" id="51412"/>
<dbReference type="GeneCards" id="ACTL6B"/>
<dbReference type="HGNC" id="HGNC:160">
    <property type="gene designation" value="ACTL6B"/>
</dbReference>
<dbReference type="HPA" id="ENSG00000077080">
    <property type="expression patterns" value="Group enriched (brain, pituitary gland)"/>
</dbReference>
<dbReference type="MalaCards" id="ACTL6B"/>
<dbReference type="MIM" id="612458">
    <property type="type" value="gene"/>
</dbReference>
<dbReference type="MIM" id="618468">
    <property type="type" value="phenotype"/>
</dbReference>
<dbReference type="MIM" id="618470">
    <property type="type" value="phenotype"/>
</dbReference>
<dbReference type="neXtProt" id="NX_O94805"/>
<dbReference type="OpenTargets" id="ENSG00000077080"/>
<dbReference type="Orphanet" id="442835">
    <property type="disease" value="Non-specific early-onset epileptic encephalopathy"/>
</dbReference>
<dbReference type="Orphanet" id="528084">
    <property type="disease" value="Non-specific syndromic intellectual disability"/>
</dbReference>
<dbReference type="PharmGKB" id="PA24482"/>
<dbReference type="VEuPathDB" id="HostDB:ENSG00000077080"/>
<dbReference type="eggNOG" id="KOG0679">
    <property type="taxonomic scope" value="Eukaryota"/>
</dbReference>
<dbReference type="GeneTree" id="ENSGT00940000160860"/>
<dbReference type="HOGENOM" id="CLU_027965_6_0_1"/>
<dbReference type="InParanoid" id="O94805"/>
<dbReference type="OMA" id="SKSWHSY"/>
<dbReference type="OrthoDB" id="5132116at2759"/>
<dbReference type="PAN-GO" id="O94805">
    <property type="GO annotations" value="6 GO annotations based on evolutionary models"/>
</dbReference>
<dbReference type="PhylomeDB" id="O94805"/>
<dbReference type="TreeFam" id="TF312863"/>
<dbReference type="PathwayCommons" id="O94805"/>
<dbReference type="Reactome" id="R-HSA-3214858">
    <property type="pathway name" value="RMTs methylate histone arginines"/>
</dbReference>
<dbReference type="Reactome" id="R-HSA-8939243">
    <property type="pathway name" value="RUNX1 interacts with co-factors whose precise effect on RUNX1 targets is not known"/>
</dbReference>
<dbReference type="SignaLink" id="O94805"/>
<dbReference type="SIGNOR" id="O94805"/>
<dbReference type="BioGRID-ORCS" id="51412">
    <property type="hits" value="15 hits in 1162 CRISPR screens"/>
</dbReference>
<dbReference type="CD-CODE" id="91857CE7">
    <property type="entry name" value="Nucleolus"/>
</dbReference>
<dbReference type="ChiTaRS" id="ACTL6B">
    <property type="organism name" value="human"/>
</dbReference>
<dbReference type="GeneWiki" id="ACTL6B"/>
<dbReference type="GenomeRNAi" id="51412"/>
<dbReference type="Pharos" id="O94805">
    <property type="development level" value="Tbio"/>
</dbReference>
<dbReference type="PRO" id="PR:O94805"/>
<dbReference type="Proteomes" id="UP000005640">
    <property type="component" value="Chromosome 7"/>
</dbReference>
<dbReference type="RNAct" id="O94805">
    <property type="molecule type" value="protein"/>
</dbReference>
<dbReference type="Bgee" id="ENSG00000077080">
    <property type="expression patterns" value="Expressed in cortical plate and 135 other cell types or tissues"/>
</dbReference>
<dbReference type="ExpressionAtlas" id="O94805">
    <property type="expression patterns" value="baseline and differential"/>
</dbReference>
<dbReference type="GO" id="GO:0140092">
    <property type="term" value="C:bBAF complex"/>
    <property type="evidence" value="ECO:0000303"/>
    <property type="project" value="ComplexPortal"/>
</dbReference>
<dbReference type="GO" id="GO:0035060">
    <property type="term" value="C:brahma complex"/>
    <property type="evidence" value="ECO:0000303"/>
    <property type="project" value="ComplexPortal"/>
</dbReference>
<dbReference type="GO" id="GO:0000785">
    <property type="term" value="C:chromatin"/>
    <property type="evidence" value="ECO:0000303"/>
    <property type="project" value="ComplexPortal"/>
</dbReference>
<dbReference type="GO" id="GO:0140288">
    <property type="term" value="C:GBAF complex"/>
    <property type="evidence" value="ECO:0000303"/>
    <property type="project" value="ComplexPortal"/>
</dbReference>
<dbReference type="GO" id="GO:0000776">
    <property type="term" value="C:kinetochore"/>
    <property type="evidence" value="ECO:0000303"/>
    <property type="project" value="ComplexPortal"/>
</dbReference>
<dbReference type="GO" id="GO:0071565">
    <property type="term" value="C:nBAF complex"/>
    <property type="evidence" value="ECO:0000250"/>
    <property type="project" value="UniProtKB"/>
</dbReference>
<dbReference type="GO" id="GO:0035267">
    <property type="term" value="C:NuA4 histone acetyltransferase complex"/>
    <property type="evidence" value="ECO:0000318"/>
    <property type="project" value="GO_Central"/>
</dbReference>
<dbReference type="GO" id="GO:0016363">
    <property type="term" value="C:nuclear matrix"/>
    <property type="evidence" value="ECO:0000303"/>
    <property type="project" value="ComplexPortal"/>
</dbReference>
<dbReference type="GO" id="GO:0005634">
    <property type="term" value="C:nucleus"/>
    <property type="evidence" value="ECO:0000314"/>
    <property type="project" value="UniProtKB"/>
</dbReference>
<dbReference type="GO" id="GO:0016586">
    <property type="term" value="C:RSC-type complex"/>
    <property type="evidence" value="ECO:0000303"/>
    <property type="project" value="ComplexPortal"/>
</dbReference>
<dbReference type="GO" id="GO:0016514">
    <property type="term" value="C:SWI/SNF complex"/>
    <property type="evidence" value="ECO:0000314"/>
    <property type="project" value="BHF-UCL"/>
</dbReference>
<dbReference type="GO" id="GO:0003682">
    <property type="term" value="F:chromatin binding"/>
    <property type="evidence" value="ECO:0000318"/>
    <property type="project" value="GO_Central"/>
</dbReference>
<dbReference type="GO" id="GO:0005200">
    <property type="term" value="F:structural constituent of cytoskeleton"/>
    <property type="evidence" value="ECO:0000304"/>
    <property type="project" value="ProtInc"/>
</dbReference>
<dbReference type="GO" id="GO:0003713">
    <property type="term" value="F:transcription coactivator activity"/>
    <property type="evidence" value="ECO:0000303"/>
    <property type="project" value="BHF-UCL"/>
</dbReference>
<dbReference type="GO" id="GO:0006325">
    <property type="term" value="P:chromatin organization"/>
    <property type="evidence" value="ECO:0000303"/>
    <property type="project" value="UniProtKB"/>
</dbReference>
<dbReference type="GO" id="GO:0006338">
    <property type="term" value="P:chromatin remodeling"/>
    <property type="evidence" value="ECO:0000314"/>
    <property type="project" value="BHF-UCL"/>
</dbReference>
<dbReference type="GO" id="GO:0016358">
    <property type="term" value="P:dendrite development"/>
    <property type="evidence" value="ECO:0000315"/>
    <property type="project" value="UniProtKB"/>
</dbReference>
<dbReference type="GO" id="GO:0045596">
    <property type="term" value="P:negative regulation of cell differentiation"/>
    <property type="evidence" value="ECO:0000303"/>
    <property type="project" value="ComplexPortal"/>
</dbReference>
<dbReference type="GO" id="GO:0007399">
    <property type="term" value="P:nervous system development"/>
    <property type="evidence" value="ECO:0000318"/>
    <property type="project" value="GO_Central"/>
</dbReference>
<dbReference type="GO" id="GO:0042551">
    <property type="term" value="P:neuron maturation"/>
    <property type="evidence" value="ECO:0000315"/>
    <property type="project" value="UniProtKB"/>
</dbReference>
<dbReference type="GO" id="GO:0045597">
    <property type="term" value="P:positive regulation of cell differentiation"/>
    <property type="evidence" value="ECO:0000303"/>
    <property type="project" value="ComplexPortal"/>
</dbReference>
<dbReference type="GO" id="GO:0008284">
    <property type="term" value="P:positive regulation of cell population proliferation"/>
    <property type="evidence" value="ECO:0000303"/>
    <property type="project" value="ComplexPortal"/>
</dbReference>
<dbReference type="GO" id="GO:2000781">
    <property type="term" value="P:positive regulation of double-strand break repair"/>
    <property type="evidence" value="ECO:0000303"/>
    <property type="project" value="ComplexPortal"/>
</dbReference>
<dbReference type="GO" id="GO:0045663">
    <property type="term" value="P:positive regulation of myoblast differentiation"/>
    <property type="evidence" value="ECO:0000303"/>
    <property type="project" value="ComplexPortal"/>
</dbReference>
<dbReference type="GO" id="GO:1902459">
    <property type="term" value="P:positive regulation of stem cell population maintenance"/>
    <property type="evidence" value="ECO:0000303"/>
    <property type="project" value="ComplexPortal"/>
</dbReference>
<dbReference type="GO" id="GO:0045582">
    <property type="term" value="P:positive regulation of T cell differentiation"/>
    <property type="evidence" value="ECO:0000303"/>
    <property type="project" value="ComplexPortal"/>
</dbReference>
<dbReference type="GO" id="GO:0070316">
    <property type="term" value="P:regulation of G0 to G1 transition"/>
    <property type="evidence" value="ECO:0000303"/>
    <property type="project" value="ComplexPortal"/>
</dbReference>
<dbReference type="GO" id="GO:2000045">
    <property type="term" value="P:regulation of G1/S transition of mitotic cell cycle"/>
    <property type="evidence" value="ECO:0000303"/>
    <property type="project" value="ComplexPortal"/>
</dbReference>
<dbReference type="GO" id="GO:0030071">
    <property type="term" value="P:regulation of mitotic metaphase/anaphase transition"/>
    <property type="evidence" value="ECO:0000303"/>
    <property type="project" value="ComplexPortal"/>
</dbReference>
<dbReference type="GO" id="GO:2000819">
    <property type="term" value="P:regulation of nucleotide-excision repair"/>
    <property type="evidence" value="ECO:0000303"/>
    <property type="project" value="ComplexPortal"/>
</dbReference>
<dbReference type="GO" id="GO:0006357">
    <property type="term" value="P:regulation of transcription by RNA polymerase II"/>
    <property type="evidence" value="ECO:0000318"/>
    <property type="project" value="GO_Central"/>
</dbReference>
<dbReference type="CDD" id="cd13395">
    <property type="entry name" value="ASKHA_NBD_Arp4_ACTL6-like"/>
    <property type="match status" value="1"/>
</dbReference>
<dbReference type="FunFam" id="3.30.420.40:FF:000796">
    <property type="entry name" value="Actin like 6B"/>
    <property type="match status" value="1"/>
</dbReference>
<dbReference type="FunFam" id="3.90.640.10:FF:000009">
    <property type="entry name" value="Actin-like 6A, isoform CRA_a"/>
    <property type="match status" value="1"/>
</dbReference>
<dbReference type="FunFam" id="2.30.36.70:FF:000005">
    <property type="entry name" value="Actin-like protein 6B"/>
    <property type="match status" value="1"/>
</dbReference>
<dbReference type="FunFam" id="3.30.420.40:FF:000375">
    <property type="entry name" value="Actin-related protein 8"/>
    <property type="match status" value="1"/>
</dbReference>
<dbReference type="FunFam" id="3.30.420.40:FF:000058">
    <property type="entry name" value="Putative actin-related protein 5"/>
    <property type="match status" value="1"/>
</dbReference>
<dbReference type="Gene3D" id="3.30.420.40">
    <property type="match status" value="2"/>
</dbReference>
<dbReference type="Gene3D" id="2.30.36.70">
    <property type="entry name" value="Actin, Chain A, domain 2"/>
    <property type="match status" value="1"/>
</dbReference>
<dbReference type="Gene3D" id="3.90.640.10">
    <property type="entry name" value="Actin, Chain A, domain 4"/>
    <property type="match status" value="1"/>
</dbReference>
<dbReference type="InterPro" id="IPR004000">
    <property type="entry name" value="Actin"/>
</dbReference>
<dbReference type="InterPro" id="IPR004001">
    <property type="entry name" value="Actin_CS"/>
</dbReference>
<dbReference type="InterPro" id="IPR043129">
    <property type="entry name" value="ATPase_NBD"/>
</dbReference>
<dbReference type="PANTHER" id="PTHR11937">
    <property type="entry name" value="ACTIN"/>
    <property type="match status" value="1"/>
</dbReference>
<dbReference type="Pfam" id="PF00022">
    <property type="entry name" value="Actin"/>
    <property type="match status" value="1"/>
</dbReference>
<dbReference type="PRINTS" id="PR00190">
    <property type="entry name" value="ACTIN"/>
</dbReference>
<dbReference type="SMART" id="SM00268">
    <property type="entry name" value="ACTIN"/>
    <property type="match status" value="1"/>
</dbReference>
<dbReference type="SUPFAM" id="SSF53067">
    <property type="entry name" value="Actin-like ATPase domain"/>
    <property type="match status" value="2"/>
</dbReference>
<dbReference type="PROSITE" id="PS00432">
    <property type="entry name" value="ACTINS_2"/>
    <property type="match status" value="1"/>
</dbReference>
<feature type="chain" id="PRO_0000089135" description="Actin-like protein 6B">
    <location>
        <begin position="1"/>
        <end position="426"/>
    </location>
</feature>
<feature type="region of interest" description="Essential for mediating its function in dendritic development; may contribute to neuronal-specific targeting" evidence="1">
    <location>
        <begin position="39"/>
        <end position="82"/>
    </location>
</feature>
<feature type="sequence variant" id="VAR_082123" description="In IDDSSAD; uncertain significance; dbSNP:rs1562851259." evidence="4">
    <original>D</original>
    <variation>G</variation>
    <location>
        <position position="77"/>
    </location>
</feature>
<feature type="sequence variant" id="VAR_082124" description="In DEE76." evidence="4">
    <location>
        <begin position="97"/>
        <end position="426"/>
    </location>
</feature>
<feature type="sequence variant" id="VAR_082125" description="In DEE76; uncertain significance; dbSNP:rs757603505." evidence="4">
    <original>R</original>
    <variation>Q</variation>
    <location>
        <position position="130"/>
    </location>
</feature>
<feature type="sequence variant" id="VAR_082126" description="In DEE76; uncertain significance." evidence="4">
    <location>
        <position position="147"/>
    </location>
</feature>
<feature type="sequence variant" id="VAR_082127" description="In DEE76." evidence="4">
    <location>
        <begin position="186"/>
        <end position="426"/>
    </location>
</feature>
<feature type="sequence variant" id="VAR_082128" description="In DEE76; dbSNP:rs1562848909." evidence="4">
    <original>L</original>
    <variation>P</variation>
    <location>
        <position position="206"/>
    </location>
</feature>
<feature type="sequence variant" id="VAR_082129" description="In DEE76." evidence="4">
    <location>
        <begin position="242"/>
        <end position="426"/>
    </location>
</feature>
<feature type="sequence variant" id="VAR_082130" description="In DEE76." evidence="4">
    <location>
        <begin position="247"/>
        <end position="426"/>
    </location>
</feature>
<feature type="sequence variant" id="VAR_082131" description="In DEE76." evidence="3">
    <location>
        <begin position="274"/>
        <end position="426"/>
    </location>
</feature>
<feature type="sequence variant" id="VAR_082132" description="In DEE76." evidence="4">
    <location>
        <begin position="284"/>
        <end position="426"/>
    </location>
</feature>
<feature type="sequence variant" id="VAR_082133" description="In DEE76." evidence="2">
    <location>
        <begin position="333"/>
        <end position="426"/>
    </location>
</feature>
<feature type="sequence variant" id="VAR_082134" description="In IDDSSAD; probable gain-of-function mutation; dbSNP:rs1131692228." evidence="4">
    <original>G</original>
    <variation>R</variation>
    <location>
        <position position="343"/>
    </location>
</feature>
<feature type="sequence variant" id="VAR_082135" description="In DEE76; dbSNP:rs955171017." evidence="3 4">
    <original>G</original>
    <variation>S</variation>
    <location>
        <position position="349"/>
    </location>
</feature>
<feature type="sequence variant" id="VAR_082136" description="In DEE76." evidence="4">
    <location>
        <begin position="411"/>
        <end position="426"/>
    </location>
</feature>
<feature type="sequence variant" id="VAR_082137" description="In DEE76; uncertain significance." evidence="4">
    <location>
        <begin position="425"/>
        <end position="426"/>
    </location>
</feature>
<proteinExistence type="evidence at protein level"/>
<protein>
    <recommendedName>
        <fullName evidence="7">Actin-like protein 6B</fullName>
    </recommendedName>
    <alternativeName>
        <fullName>53 kDa BRG1-associated factor B</fullName>
    </alternativeName>
    <alternativeName>
        <fullName>Actin-related protein Baf53b</fullName>
    </alternativeName>
    <alternativeName>
        <fullName>ArpNalpha</fullName>
    </alternativeName>
    <alternativeName>
        <fullName>BRG1-associated factor 53B</fullName>
        <shortName>BAF53B</shortName>
    </alternativeName>
</protein>
<accession>O94805</accession>
<accession>A4D2D0</accession>
<accession>O75421</accession>
<organism>
    <name type="scientific">Homo sapiens</name>
    <name type="common">Human</name>
    <dbReference type="NCBI Taxonomy" id="9606"/>
    <lineage>
        <taxon>Eukaryota</taxon>
        <taxon>Metazoa</taxon>
        <taxon>Chordata</taxon>
        <taxon>Craniata</taxon>
        <taxon>Vertebrata</taxon>
        <taxon>Euteleostomi</taxon>
        <taxon>Mammalia</taxon>
        <taxon>Eutheria</taxon>
        <taxon>Euarchontoglires</taxon>
        <taxon>Primates</taxon>
        <taxon>Haplorrhini</taxon>
        <taxon>Catarrhini</taxon>
        <taxon>Hominidae</taxon>
        <taxon>Homo</taxon>
    </lineage>
</organism>
<sequence length="426" mass="46877">MSGGVYGGDEVGALVFDIGSFSVRAGYAGEDCPKADFPTTVGLLAAEEGGGLELEGDKEKKGKIFHIDTNALHVPRDGAEVMSPLKNGMIEDWECFRAILDHTYSKHVKSEPNLHPVLMSEAPWNTRAKREKLTELMFEQYNIPAFFLCKTAVLTAFANGRSTGLVLDSGATHTTAIPVHDGYVLQQGIVKSPLAGDFISMQCRELFQEMAIDIIPPYMIAAKEPVREGAPPNWKKKEKLPQVSKSWHNYMCNEVIQDFQASVLQVSDSPYDEQVAAQMPTVHYEMPNGYNTDYGAERLRIPEGLFDPSNVKGLSGNTMLGVGHVVTTSIGMCDIDIRPGLYGSVIVTGGNTLLQGFTDRLNRELSQKTPPSMRLKLIASNSTMERKFSPWIGGSILASLGTFQQMWISKQEYEEGGKQCVERKCP</sequence>